<sequence>MSGEDYEKRLQAWVGRTLGEPRRGQDPVNVPMIRHWVEAMGDTNPVYLDEEAARATGRETVVAPASMMQAWTMRGYAATVNPEPEAGGMEELTALLAEGGYTSVVATDSEFEFHRELVPGDHISVQEQVESISPEKKTALGEGRFITTLRTYRDQRGEVVATQRWRLLRFRPKKTEQTEQKPKALRPRPAINRDNAFWFEAAKQRRLVIQRCAACKTLRHPPGPCCPHCGSFDWDTVEAAGTGQVYSYIVAHHPPHPAFEMPYVVALVELTEGTRLVTNLVGIAPDKIEIGMPVVLDWLEADPELTLPVFRPAVPQEES</sequence>
<keyword id="KW-0002">3D-structure</keyword>
<keyword id="KW-0088">Bile acid catabolism</keyword>
<keyword id="KW-0442">Lipid degradation</keyword>
<keyword id="KW-0443">Lipid metabolism</keyword>
<keyword id="KW-0456">Lyase</keyword>
<keyword id="KW-1185">Reference proteome</keyword>
<keyword id="KW-0753">Steroid metabolism</keyword>
<accession>D1AB77</accession>
<dbReference type="EC" id="4.2.1.-" evidence="1"/>
<dbReference type="EMBL" id="CP001738">
    <property type="protein sequence ID" value="ACY99020.1"/>
    <property type="molecule type" value="Genomic_DNA"/>
</dbReference>
<dbReference type="RefSeq" id="WP_012853804.1">
    <property type="nucleotide sequence ID" value="NC_013510.1"/>
</dbReference>
<dbReference type="PDB" id="6OK1">
    <property type="method" value="X-ray"/>
    <property type="resolution" value="1.70 A"/>
    <property type="chains" value="B/D=188-319"/>
</dbReference>
<dbReference type="PDBsum" id="6OK1"/>
<dbReference type="SMR" id="D1AB77"/>
<dbReference type="STRING" id="471852.Tcur_3482"/>
<dbReference type="KEGG" id="tcu:Tcur_3482"/>
<dbReference type="eggNOG" id="COG1545">
    <property type="taxonomic scope" value="Bacteria"/>
</dbReference>
<dbReference type="eggNOG" id="COG2030">
    <property type="taxonomic scope" value="Bacteria"/>
</dbReference>
<dbReference type="HOGENOM" id="CLU_057272_0_0_11"/>
<dbReference type="OrthoDB" id="4275032at2"/>
<dbReference type="Proteomes" id="UP000001918">
    <property type="component" value="Chromosome"/>
</dbReference>
<dbReference type="GO" id="GO:0016829">
    <property type="term" value="F:lyase activity"/>
    <property type="evidence" value="ECO:0007669"/>
    <property type="project" value="UniProtKB-KW"/>
</dbReference>
<dbReference type="GO" id="GO:0030573">
    <property type="term" value="P:bile acid catabolic process"/>
    <property type="evidence" value="ECO:0007669"/>
    <property type="project" value="UniProtKB-KW"/>
</dbReference>
<dbReference type="GO" id="GO:0016042">
    <property type="term" value="P:lipid catabolic process"/>
    <property type="evidence" value="ECO:0007669"/>
    <property type="project" value="UniProtKB-KW"/>
</dbReference>
<dbReference type="Gene3D" id="3.10.129.10">
    <property type="entry name" value="Hotdog Thioesterase"/>
    <property type="match status" value="1"/>
</dbReference>
<dbReference type="InterPro" id="IPR002878">
    <property type="entry name" value="ChsH2_C"/>
</dbReference>
<dbReference type="InterPro" id="IPR022002">
    <property type="entry name" value="ChsH2_Znr"/>
</dbReference>
<dbReference type="InterPro" id="IPR039569">
    <property type="entry name" value="FAS1-like_DH_region"/>
</dbReference>
<dbReference type="InterPro" id="IPR029069">
    <property type="entry name" value="HotDog_dom_sf"/>
</dbReference>
<dbReference type="InterPro" id="IPR012340">
    <property type="entry name" value="NA-bd_OB-fold"/>
</dbReference>
<dbReference type="InterPro" id="IPR052513">
    <property type="entry name" value="Thioester_dehydratase-like"/>
</dbReference>
<dbReference type="PANTHER" id="PTHR34075">
    <property type="entry name" value="BLR3430 PROTEIN"/>
    <property type="match status" value="1"/>
</dbReference>
<dbReference type="PANTHER" id="PTHR34075:SF5">
    <property type="entry name" value="BLR3430 PROTEIN"/>
    <property type="match status" value="1"/>
</dbReference>
<dbReference type="Pfam" id="PF13452">
    <property type="entry name" value="FAS1_DH_region"/>
    <property type="match status" value="1"/>
</dbReference>
<dbReference type="Pfam" id="PF01796">
    <property type="entry name" value="OB_ChsH2_C"/>
    <property type="match status" value="1"/>
</dbReference>
<dbReference type="Pfam" id="PF12172">
    <property type="entry name" value="zf-ChsH2"/>
    <property type="match status" value="1"/>
</dbReference>
<dbReference type="SUPFAM" id="SSF50249">
    <property type="entry name" value="Nucleic acid-binding proteins"/>
    <property type="match status" value="1"/>
</dbReference>
<dbReference type="SUPFAM" id="SSF54637">
    <property type="entry name" value="Thioesterase/thiol ester dehydrase-isomerase"/>
    <property type="match status" value="1"/>
</dbReference>
<evidence type="ECO:0000250" key="1">
    <source>
        <dbReference type="UniProtKB" id="I6YGF8"/>
    </source>
</evidence>
<evidence type="ECO:0000269" key="2">
    <source>
    </source>
</evidence>
<evidence type="ECO:0000303" key="3">
    <source>
    </source>
</evidence>
<evidence type="ECO:0000305" key="4"/>
<evidence type="ECO:0000305" key="5">
    <source>
    </source>
</evidence>
<evidence type="ECO:0000312" key="6">
    <source>
        <dbReference type="EMBL" id="ACY99020.1"/>
    </source>
</evidence>
<evidence type="ECO:0007744" key="7">
    <source>
        <dbReference type="PDB" id="6OK1"/>
    </source>
</evidence>
<evidence type="ECO:0007829" key="8">
    <source>
        <dbReference type="PDB" id="6OK1"/>
    </source>
</evidence>
<gene>
    <name evidence="3" type="primary">chsH2</name>
    <name evidence="6" type="ordered locus">Tcur_3482</name>
</gene>
<feature type="chain" id="PRO_0000452242" description="Probable enoyl-CoA hydratase alpha subunit">
    <location>
        <begin position="1"/>
        <end position="319"/>
    </location>
</feature>
<feature type="region of interest" description="DUF35" evidence="4">
    <location>
        <begin position="199"/>
        <end position="298"/>
    </location>
</feature>
<feature type="turn" evidence="8">
    <location>
        <begin position="193"/>
        <end position="195"/>
    </location>
</feature>
<feature type="helix" evidence="8">
    <location>
        <begin position="196"/>
        <end position="203"/>
    </location>
</feature>
<feature type="strand" evidence="8">
    <location>
        <begin position="208"/>
        <end position="212"/>
    </location>
</feature>
<feature type="turn" evidence="8">
    <location>
        <begin position="213"/>
        <end position="215"/>
    </location>
</feature>
<feature type="strand" evidence="8">
    <location>
        <begin position="218"/>
        <end position="221"/>
    </location>
</feature>
<feature type="turn" evidence="8">
    <location>
        <begin position="227"/>
        <end position="229"/>
    </location>
</feature>
<feature type="strand" evidence="8">
    <location>
        <begin position="234"/>
        <end position="238"/>
    </location>
</feature>
<feature type="strand" evidence="8">
    <location>
        <begin position="241"/>
        <end position="251"/>
    </location>
</feature>
<feature type="strand" evidence="8">
    <location>
        <begin position="261"/>
        <end position="270"/>
    </location>
</feature>
<feature type="strand" evidence="8">
    <location>
        <begin position="275"/>
        <end position="280"/>
    </location>
</feature>
<feature type="helix" evidence="8">
    <location>
        <begin position="285"/>
        <end position="287"/>
    </location>
</feature>
<feature type="strand" evidence="8">
    <location>
        <begin position="293"/>
        <end position="302"/>
    </location>
</feature>
<feature type="strand" evidence="8">
    <location>
        <begin position="305"/>
        <end position="314"/>
    </location>
</feature>
<organism>
    <name type="scientific">Thermomonospora curvata (strain ATCC 19995 / DSM 43183 / JCM 3096 / KCTC 9072 / NBRC 15933 / NCIMB 10081 / Henssen B9)</name>
    <dbReference type="NCBI Taxonomy" id="471852"/>
    <lineage>
        <taxon>Bacteria</taxon>
        <taxon>Bacillati</taxon>
        <taxon>Actinomycetota</taxon>
        <taxon>Actinomycetes</taxon>
        <taxon>Streptosporangiales</taxon>
        <taxon>Thermomonosporaceae</taxon>
        <taxon>Thermomonospora</taxon>
    </lineage>
</organism>
<comment type="function">
    <text evidence="5">Probably involved in bile acid degradation.</text>
</comment>
<comment type="subunit">
    <text evidence="2 5">Heterodimer composed of ChsH1 and ChsH2. Two heterodimers combine to form a heterotetramer (Probable). The complex interacts with Ltp2 via the DUF35 C-terminal region of ChsH2 (PubMed:31209106).</text>
</comment>
<comment type="similarity">
    <text evidence="4">Belongs to the thioester dehydratase family.</text>
</comment>
<proteinExistence type="evidence at protein level"/>
<name>CHSH2_THECD</name>
<protein>
    <recommendedName>
        <fullName evidence="4">Probable enoyl-CoA hydratase alpha subunit</fullName>
        <ecNumber evidence="1">4.2.1.-</ecNumber>
    </recommendedName>
</protein>
<reference key="1">
    <citation type="journal article" date="2011" name="Stand. Genomic Sci.">
        <title>Complete genome sequence of Thermomonospora curvata type strain (B9).</title>
        <authorList>
            <person name="Chertkov O."/>
            <person name="Sikorski J."/>
            <person name="Nolan M."/>
            <person name="Lapidus A."/>
            <person name="Lucas S."/>
            <person name="Del Rio T.G."/>
            <person name="Tice H."/>
            <person name="Cheng J.F."/>
            <person name="Goodwin L."/>
            <person name="Pitluck S."/>
            <person name="Liolios K."/>
            <person name="Ivanova N."/>
            <person name="Mavromatis K."/>
            <person name="Mikhailova N."/>
            <person name="Ovchinnikova G."/>
            <person name="Pati A."/>
            <person name="Chen A."/>
            <person name="Palaniappan K."/>
            <person name="Djao O.D."/>
            <person name="Land M."/>
            <person name="Hauser L."/>
            <person name="Chang Y.J."/>
            <person name="Jeffries C.D."/>
            <person name="Brettin T."/>
            <person name="Han C."/>
            <person name="Detter J.C."/>
            <person name="Rohde M."/>
            <person name="Goeker M."/>
            <person name="Woyke T."/>
            <person name="Bristow J."/>
            <person name="Eisen J.A."/>
            <person name="Markowitz V."/>
            <person name="Hugenholtz P."/>
            <person name="Klenk H.P."/>
            <person name="Kyrpides N.C."/>
        </authorList>
    </citation>
    <scope>NUCLEOTIDE SEQUENCE [LARGE SCALE GENOMIC DNA]</scope>
    <source>
        <strain>ATCC 19995 / DSM 43183 / JCM 3096 / KCTC 9072 / NBRC 15933 / NCIMB 10081 / Henssen B9</strain>
    </source>
</reference>
<reference evidence="7" key="2">
    <citation type="journal article" date="2019" name="J. Biol. Chem.">
        <title>The steroid side-chain-cleaving aldolase Ltp2-ChsH2DUF35 is a thiolase superfamily member with a radically repurposed active site.</title>
        <authorList>
            <person name="Aggett R."/>
            <person name="Mallette E."/>
            <person name="Gilbert S.E."/>
            <person name="Vachon M.A."/>
            <person name="Schroeter K.L."/>
            <person name="Kimber M.S."/>
            <person name="Seah S.Y.K."/>
        </authorList>
    </citation>
    <scope>X-RAY CRYSTALLOGRAPHY (1.70 ANGSTROMS) OF 188-319 IN COMPLEX WITH LTP2</scope>
    <scope>FUNCTION</scope>
    <scope>SUBUNIT</scope>
    <scope>INTERACTION WITH LTP2</scope>
    <source>
        <strain>ATCC 19995 / DSM 43183 / JCM 3096 / KCTC 9072 / NBRC 15933 / NCIMB 10081 / Henssen B9</strain>
    </source>
</reference>